<proteinExistence type="evidence at protein level"/>
<reference key="1">
    <citation type="journal article" date="1998" name="Genomics">
        <title>High-resolution genetic, physical, and transcript map of the mnd2 region of mouse chromosome 6.</title>
        <authorList>
            <person name="Weber J.S."/>
            <person name="Jang W."/>
            <person name="Simin K."/>
            <person name="Lu W."/>
            <person name="Yu J."/>
            <person name="Meisler M.H."/>
        </authorList>
    </citation>
    <scope>NUCLEOTIDE SEQUENCE [MRNA]</scope>
    <source>
        <strain>C57BL/6J</strain>
    </source>
</reference>
<reference key="2">
    <citation type="journal article" date="2005" name="Science">
        <title>The transcriptional landscape of the mammalian genome.</title>
        <authorList>
            <person name="Carninci P."/>
            <person name="Kasukawa T."/>
            <person name="Katayama S."/>
            <person name="Gough J."/>
            <person name="Frith M.C."/>
            <person name="Maeda N."/>
            <person name="Oyama R."/>
            <person name="Ravasi T."/>
            <person name="Lenhard B."/>
            <person name="Wells C."/>
            <person name="Kodzius R."/>
            <person name="Shimokawa K."/>
            <person name="Bajic V.B."/>
            <person name="Brenner S.E."/>
            <person name="Batalov S."/>
            <person name="Forrest A.R."/>
            <person name="Zavolan M."/>
            <person name="Davis M.J."/>
            <person name="Wilming L.G."/>
            <person name="Aidinis V."/>
            <person name="Allen J.E."/>
            <person name="Ambesi-Impiombato A."/>
            <person name="Apweiler R."/>
            <person name="Aturaliya R.N."/>
            <person name="Bailey T.L."/>
            <person name="Bansal M."/>
            <person name="Baxter L."/>
            <person name="Beisel K.W."/>
            <person name="Bersano T."/>
            <person name="Bono H."/>
            <person name="Chalk A.M."/>
            <person name="Chiu K.P."/>
            <person name="Choudhary V."/>
            <person name="Christoffels A."/>
            <person name="Clutterbuck D.R."/>
            <person name="Crowe M.L."/>
            <person name="Dalla E."/>
            <person name="Dalrymple B.P."/>
            <person name="de Bono B."/>
            <person name="Della Gatta G."/>
            <person name="di Bernardo D."/>
            <person name="Down T."/>
            <person name="Engstrom P."/>
            <person name="Fagiolini M."/>
            <person name="Faulkner G."/>
            <person name="Fletcher C.F."/>
            <person name="Fukushima T."/>
            <person name="Furuno M."/>
            <person name="Futaki S."/>
            <person name="Gariboldi M."/>
            <person name="Georgii-Hemming P."/>
            <person name="Gingeras T.R."/>
            <person name="Gojobori T."/>
            <person name="Green R.E."/>
            <person name="Gustincich S."/>
            <person name="Harbers M."/>
            <person name="Hayashi Y."/>
            <person name="Hensch T.K."/>
            <person name="Hirokawa N."/>
            <person name="Hill D."/>
            <person name="Huminiecki L."/>
            <person name="Iacono M."/>
            <person name="Ikeo K."/>
            <person name="Iwama A."/>
            <person name="Ishikawa T."/>
            <person name="Jakt M."/>
            <person name="Kanapin A."/>
            <person name="Katoh M."/>
            <person name="Kawasawa Y."/>
            <person name="Kelso J."/>
            <person name="Kitamura H."/>
            <person name="Kitano H."/>
            <person name="Kollias G."/>
            <person name="Krishnan S.P."/>
            <person name="Kruger A."/>
            <person name="Kummerfeld S.K."/>
            <person name="Kurochkin I.V."/>
            <person name="Lareau L.F."/>
            <person name="Lazarevic D."/>
            <person name="Lipovich L."/>
            <person name="Liu J."/>
            <person name="Liuni S."/>
            <person name="McWilliam S."/>
            <person name="Madan Babu M."/>
            <person name="Madera M."/>
            <person name="Marchionni L."/>
            <person name="Matsuda H."/>
            <person name="Matsuzawa S."/>
            <person name="Miki H."/>
            <person name="Mignone F."/>
            <person name="Miyake S."/>
            <person name="Morris K."/>
            <person name="Mottagui-Tabar S."/>
            <person name="Mulder N."/>
            <person name="Nakano N."/>
            <person name="Nakauchi H."/>
            <person name="Ng P."/>
            <person name="Nilsson R."/>
            <person name="Nishiguchi S."/>
            <person name="Nishikawa S."/>
            <person name="Nori F."/>
            <person name="Ohara O."/>
            <person name="Okazaki Y."/>
            <person name="Orlando V."/>
            <person name="Pang K.C."/>
            <person name="Pavan W.J."/>
            <person name="Pavesi G."/>
            <person name="Pesole G."/>
            <person name="Petrovsky N."/>
            <person name="Piazza S."/>
            <person name="Reed J."/>
            <person name="Reid J.F."/>
            <person name="Ring B.Z."/>
            <person name="Ringwald M."/>
            <person name="Rost B."/>
            <person name="Ruan Y."/>
            <person name="Salzberg S.L."/>
            <person name="Sandelin A."/>
            <person name="Schneider C."/>
            <person name="Schoenbach C."/>
            <person name="Sekiguchi K."/>
            <person name="Semple C.A."/>
            <person name="Seno S."/>
            <person name="Sessa L."/>
            <person name="Sheng Y."/>
            <person name="Shibata Y."/>
            <person name="Shimada H."/>
            <person name="Shimada K."/>
            <person name="Silva D."/>
            <person name="Sinclair B."/>
            <person name="Sperling S."/>
            <person name="Stupka E."/>
            <person name="Sugiura K."/>
            <person name="Sultana R."/>
            <person name="Takenaka Y."/>
            <person name="Taki K."/>
            <person name="Tammoja K."/>
            <person name="Tan S.L."/>
            <person name="Tang S."/>
            <person name="Taylor M.S."/>
            <person name="Tegner J."/>
            <person name="Teichmann S.A."/>
            <person name="Ueda H.R."/>
            <person name="van Nimwegen E."/>
            <person name="Verardo R."/>
            <person name="Wei C.L."/>
            <person name="Yagi K."/>
            <person name="Yamanishi H."/>
            <person name="Zabarovsky E."/>
            <person name="Zhu S."/>
            <person name="Zimmer A."/>
            <person name="Hide W."/>
            <person name="Bult C."/>
            <person name="Grimmond S.M."/>
            <person name="Teasdale R.D."/>
            <person name="Liu E.T."/>
            <person name="Brusic V."/>
            <person name="Quackenbush J."/>
            <person name="Wahlestedt C."/>
            <person name="Mattick J.S."/>
            <person name="Hume D.A."/>
            <person name="Kai C."/>
            <person name="Sasaki D."/>
            <person name="Tomaru Y."/>
            <person name="Fukuda S."/>
            <person name="Kanamori-Katayama M."/>
            <person name="Suzuki M."/>
            <person name="Aoki J."/>
            <person name="Arakawa T."/>
            <person name="Iida J."/>
            <person name="Imamura K."/>
            <person name="Itoh M."/>
            <person name="Kato T."/>
            <person name="Kawaji H."/>
            <person name="Kawagashira N."/>
            <person name="Kawashima T."/>
            <person name="Kojima M."/>
            <person name="Kondo S."/>
            <person name="Konno H."/>
            <person name="Nakano K."/>
            <person name="Ninomiya N."/>
            <person name="Nishio T."/>
            <person name="Okada M."/>
            <person name="Plessy C."/>
            <person name="Shibata K."/>
            <person name="Shiraki T."/>
            <person name="Suzuki S."/>
            <person name="Tagami M."/>
            <person name="Waki K."/>
            <person name="Watahiki A."/>
            <person name="Okamura-Oho Y."/>
            <person name="Suzuki H."/>
            <person name="Kawai J."/>
            <person name="Hayashizaki Y."/>
        </authorList>
    </citation>
    <scope>NUCLEOTIDE SEQUENCE [LARGE SCALE MRNA]</scope>
    <source>
        <strain>C57BL/6J</strain>
        <strain>NOD</strain>
        <tissue>Testis</tissue>
    </source>
</reference>
<reference key="3">
    <citation type="journal article" date="2004" name="Genome Res.">
        <title>The status, quality, and expansion of the NIH full-length cDNA project: the Mammalian Gene Collection (MGC).</title>
        <authorList>
            <consortium name="The MGC Project Team"/>
        </authorList>
    </citation>
    <scope>NUCLEOTIDE SEQUENCE [LARGE SCALE MRNA]</scope>
    <source>
        <strain>C57BL/6J</strain>
        <tissue>Brain</tissue>
    </source>
</reference>
<reference key="4">
    <citation type="journal article" date="2010" name="Cell">
        <title>A tissue-specific atlas of mouse protein phosphorylation and expression.</title>
        <authorList>
            <person name="Huttlin E.L."/>
            <person name="Jedrychowski M.P."/>
            <person name="Elias J.E."/>
            <person name="Goswami T."/>
            <person name="Rad R."/>
            <person name="Beausoleil S.A."/>
            <person name="Villen J."/>
            <person name="Haas W."/>
            <person name="Sowa M.E."/>
            <person name="Gygi S.P."/>
        </authorList>
    </citation>
    <scope>IDENTIFICATION BY MASS SPECTROMETRY [LARGE SCALE ANALYSIS]</scope>
    <source>
        <tissue>Brain</tissue>
        <tissue>Testis</tissue>
    </source>
</reference>
<comment type="function">
    <text evidence="1 2">Plays a role in the adhesion and fusion of the sperm-oocyte membrane through its interactions with IZUMO1 and IZUMO1R/JUNO. When cross-linked to form dimers and trimers, it has a regulatory effect on ERK signaling pathway activity in response to EGF stimulation. Colocalizes with the EGF receptor in WDR54-specific vesicle where it sustains the internalization and controls the degradation of the EGF receptor after EGF stimulation.</text>
</comment>
<comment type="subunit">
    <text evidence="1 2">Homodimer and homotrimer; forms tight forms of dimers and trimers. Interacts with IZUMO1 and IZUMO1R/JUNO.</text>
</comment>
<comment type="subcellular location">
    <subcellularLocation>
        <location evidence="2">Vesicle</location>
    </subcellularLocation>
    <subcellularLocation>
        <location evidence="1">Cytoplasm</location>
    </subcellularLocation>
    <subcellularLocation>
        <location evidence="1">Cell membrane</location>
    </subcellularLocation>
    <text evidence="2">Aggregates in vesicles when cross-linked.</text>
</comment>
<comment type="domain">
    <text evidence="2">WD6 repeat is required for cross-linking by TGM2.</text>
</comment>
<comment type="PTM">
    <text evidence="2">Cross-linked to tightly form both dimers and trimers by TGM2. Cross-linking enhances the activation of EGF receptor-mediated signaling pathway. Cross-linking is inhibited by EGF.</text>
</comment>
<comment type="PTM">
    <text evidence="2">Ubiquitinated. EGF increases ubiquitination.</text>
</comment>
<organism>
    <name type="scientific">Mus musculus</name>
    <name type="common">Mouse</name>
    <dbReference type="NCBI Taxonomy" id="10090"/>
    <lineage>
        <taxon>Eukaryota</taxon>
        <taxon>Metazoa</taxon>
        <taxon>Chordata</taxon>
        <taxon>Craniata</taxon>
        <taxon>Vertebrata</taxon>
        <taxon>Euteleostomi</taxon>
        <taxon>Mammalia</taxon>
        <taxon>Eutheria</taxon>
        <taxon>Euarchontoglires</taxon>
        <taxon>Glires</taxon>
        <taxon>Rodentia</taxon>
        <taxon>Myomorpha</taxon>
        <taxon>Muroidea</taxon>
        <taxon>Muridae</taxon>
        <taxon>Murinae</taxon>
        <taxon>Mus</taxon>
        <taxon>Mus</taxon>
    </lineage>
</organism>
<dbReference type="EMBL" id="AF053628">
    <property type="protein sequence ID" value="AAD54515.1"/>
    <property type="molecule type" value="mRNA"/>
</dbReference>
<dbReference type="EMBL" id="AK006536">
    <property type="protein sequence ID" value="BAB24640.1"/>
    <property type="molecule type" value="mRNA"/>
</dbReference>
<dbReference type="EMBL" id="AK154345">
    <property type="protein sequence ID" value="BAE32529.1"/>
    <property type="molecule type" value="mRNA"/>
</dbReference>
<dbReference type="EMBL" id="BC083332">
    <property type="protein sequence ID" value="AAH83332.1"/>
    <property type="molecule type" value="mRNA"/>
</dbReference>
<dbReference type="CCDS" id="CCDS20275.1"/>
<dbReference type="RefSeq" id="NP_001349048.1">
    <property type="nucleotide sequence ID" value="NM_001362119.1"/>
</dbReference>
<dbReference type="RefSeq" id="NP_076279.1">
    <property type="nucleotide sequence ID" value="NM_023790.2"/>
</dbReference>
<dbReference type="RefSeq" id="XP_006506787.1">
    <property type="nucleotide sequence ID" value="XM_006506724.3"/>
</dbReference>
<dbReference type="RefSeq" id="XP_006506789.1">
    <property type="nucleotide sequence ID" value="XM_006506726.3"/>
</dbReference>
<dbReference type="FunCoup" id="Q9R0D8">
    <property type="interactions" value="177"/>
</dbReference>
<dbReference type="STRING" id="10090.ENSMUSP00000116608"/>
<dbReference type="GlyGen" id="Q9R0D8">
    <property type="glycosylation" value="1 site, 1 N-linked glycan (1 site)"/>
</dbReference>
<dbReference type="iPTMnet" id="Q9R0D8"/>
<dbReference type="PhosphoSitePlus" id="Q9R0D8"/>
<dbReference type="SwissPalm" id="Q9R0D8"/>
<dbReference type="PaxDb" id="10090-ENSMUSP00000116608"/>
<dbReference type="PeptideAtlas" id="Q9R0D8"/>
<dbReference type="ProteomicsDB" id="297893"/>
<dbReference type="Pumba" id="Q9R0D8"/>
<dbReference type="Antibodypedia" id="51442">
    <property type="antibodies" value="79 antibodies from 15 providers"/>
</dbReference>
<dbReference type="Ensembl" id="ENSMUST00000125894.9">
    <property type="protein sequence ID" value="ENSMUSP00000122873.3"/>
    <property type="gene ID" value="ENSMUSG00000030032.15"/>
</dbReference>
<dbReference type="Ensembl" id="ENSMUST00000153148.8">
    <property type="protein sequence ID" value="ENSMUSP00000116608.2"/>
    <property type="gene ID" value="ENSMUSG00000030032.15"/>
</dbReference>
<dbReference type="GeneID" id="75659"/>
<dbReference type="KEGG" id="mmu:75659"/>
<dbReference type="UCSC" id="uc009cmv.2">
    <property type="organism name" value="mouse"/>
</dbReference>
<dbReference type="AGR" id="MGI:1922909"/>
<dbReference type="CTD" id="84058"/>
<dbReference type="MGI" id="MGI:1922909">
    <property type="gene designation" value="Wdr54"/>
</dbReference>
<dbReference type="VEuPathDB" id="HostDB:ENSMUSG00000030032"/>
<dbReference type="eggNOG" id="ENOG502QRUZ">
    <property type="taxonomic scope" value="Eukaryota"/>
</dbReference>
<dbReference type="GeneTree" id="ENSGT00390000014530"/>
<dbReference type="HOGENOM" id="CLU_045688_0_0_1"/>
<dbReference type="InParanoid" id="Q9R0D8"/>
<dbReference type="OMA" id="WENYICV"/>
<dbReference type="OrthoDB" id="756370at2759"/>
<dbReference type="PhylomeDB" id="Q9R0D8"/>
<dbReference type="TreeFam" id="TF329316"/>
<dbReference type="BioGRID-ORCS" id="75659">
    <property type="hits" value="1 hit in 78 CRISPR screens"/>
</dbReference>
<dbReference type="PRO" id="PR:Q9R0D8"/>
<dbReference type="Proteomes" id="UP000000589">
    <property type="component" value="Chromosome 6"/>
</dbReference>
<dbReference type="RNAct" id="Q9R0D8">
    <property type="molecule type" value="protein"/>
</dbReference>
<dbReference type="Bgee" id="ENSMUSG00000030032">
    <property type="expression patterns" value="Expressed in olfactory epithelium and 144 other cell types or tissues"/>
</dbReference>
<dbReference type="ExpressionAtlas" id="Q9R0D8">
    <property type="expression patterns" value="baseline and differential"/>
</dbReference>
<dbReference type="GO" id="GO:0005737">
    <property type="term" value="C:cytoplasm"/>
    <property type="evidence" value="ECO:0000250"/>
    <property type="project" value="UniProtKB"/>
</dbReference>
<dbReference type="GO" id="GO:0005886">
    <property type="term" value="C:plasma membrane"/>
    <property type="evidence" value="ECO:0000250"/>
    <property type="project" value="UniProtKB"/>
</dbReference>
<dbReference type="GO" id="GO:0031982">
    <property type="term" value="C:vesicle"/>
    <property type="evidence" value="ECO:0000250"/>
    <property type="project" value="UniProtKB"/>
</dbReference>
<dbReference type="GO" id="GO:0042803">
    <property type="term" value="F:protein homodimerization activity"/>
    <property type="evidence" value="ECO:0000250"/>
    <property type="project" value="UniProtKB"/>
</dbReference>
<dbReference type="GO" id="GO:0007342">
    <property type="term" value="P:fusion of sperm to egg plasma membrane involved in single fertilization"/>
    <property type="evidence" value="ECO:0000250"/>
    <property type="project" value="UniProtKB"/>
</dbReference>
<dbReference type="GO" id="GO:0002091">
    <property type="term" value="P:negative regulation of receptor internalization"/>
    <property type="evidence" value="ECO:0000250"/>
    <property type="project" value="UniProtKB"/>
</dbReference>
<dbReference type="GO" id="GO:0042058">
    <property type="term" value="P:regulation of epidermal growth factor receptor signaling pathway"/>
    <property type="evidence" value="ECO:0000250"/>
    <property type="project" value="UniProtKB"/>
</dbReference>
<dbReference type="GO" id="GO:0043408">
    <property type="term" value="P:regulation of MAPK cascade"/>
    <property type="evidence" value="ECO:0000250"/>
    <property type="project" value="UniProtKB"/>
</dbReference>
<dbReference type="GO" id="GO:0007338">
    <property type="term" value="P:single fertilization"/>
    <property type="evidence" value="ECO:0000250"/>
    <property type="project" value="UniProtKB"/>
</dbReference>
<dbReference type="FunFam" id="2.130.10.10:FF:000412">
    <property type="entry name" value="WD repeat domain 54"/>
    <property type="match status" value="1"/>
</dbReference>
<dbReference type="FunFam" id="2.130.10.10:FF:000508">
    <property type="entry name" value="WD repeat-containing protein 54 isoform X2"/>
    <property type="match status" value="1"/>
</dbReference>
<dbReference type="Gene3D" id="2.130.10.10">
    <property type="entry name" value="YVTN repeat-like/Quinoprotein amine dehydrogenase"/>
    <property type="match status" value="1"/>
</dbReference>
<dbReference type="InterPro" id="IPR015943">
    <property type="entry name" value="WD40/YVTN_repeat-like_dom_sf"/>
</dbReference>
<dbReference type="InterPro" id="IPR036322">
    <property type="entry name" value="WD40_repeat_dom_sf"/>
</dbReference>
<dbReference type="InterPro" id="IPR001680">
    <property type="entry name" value="WD40_rpt"/>
</dbReference>
<dbReference type="InterPro" id="IPR049546">
    <property type="entry name" value="WDR54_beta_propeller"/>
</dbReference>
<dbReference type="Pfam" id="PF21031">
    <property type="entry name" value="WDR54"/>
    <property type="match status" value="1"/>
</dbReference>
<dbReference type="SMART" id="SM00320">
    <property type="entry name" value="WD40"/>
    <property type="match status" value="3"/>
</dbReference>
<dbReference type="SUPFAM" id="SSF50978">
    <property type="entry name" value="WD40 repeat-like"/>
    <property type="match status" value="1"/>
</dbReference>
<dbReference type="PROSITE" id="PS50082">
    <property type="entry name" value="WD_REPEATS_2"/>
    <property type="match status" value="1"/>
</dbReference>
<dbReference type="PROSITE" id="PS50294">
    <property type="entry name" value="WD_REPEATS_REGION"/>
    <property type="match status" value="1"/>
</dbReference>
<feature type="chain" id="PRO_0000051416" description="WD repeat-containing protein 54">
    <location>
        <begin position="1"/>
        <end position="334"/>
    </location>
</feature>
<feature type="repeat" description="WD 1" evidence="3">
    <location>
        <begin position="116"/>
        <end position="155"/>
    </location>
</feature>
<feature type="repeat" description="WD 2" evidence="3">
    <location>
        <begin position="162"/>
        <end position="206"/>
    </location>
</feature>
<feature type="repeat" description="WD 3" evidence="3">
    <location>
        <begin position="250"/>
        <end position="289"/>
    </location>
</feature>
<accession>Q9R0D8</accession>
<accession>Q3U4A4</accession>
<sequence length="334" mass="35613">MFRRERSIPLRSSAAALSNNLSVLQLPARDLTHFGVVHGPSAQLLSAAPEGVPLAQRQLHVKEGAGVSPPLITQVHWCVLPFRVLLVLTSHRGIQMYESDGSVMVYWHALDSGDASSVQAMFARGIAASVHFICVGTCSGRVLVFDIPAKGPNIVLSEELAGHQTPITDIATERAQGQDGVADMVTADDSGVLCVWRSGPEFTLLTRIPGFGVPCPSVQLWQGIVAAGYGNGQVRLYDASTGALHVQISAHARTISALDLAPEVGKLLSAAEDTFVHIWKLNRNPESGSIEVEHCHGECISDTQVCGARFCDPLGSSFAVTGYDLAEILRFGTV</sequence>
<protein>
    <recommendedName>
        <fullName evidence="4">WD repeat-containing protein 54</fullName>
    </recommendedName>
</protein>
<keyword id="KW-1003">Cell membrane</keyword>
<keyword id="KW-0963">Cytoplasm</keyword>
<keyword id="KW-0278">Fertilization</keyword>
<keyword id="KW-0472">Membrane</keyword>
<keyword id="KW-1185">Reference proteome</keyword>
<keyword id="KW-0677">Repeat</keyword>
<keyword id="KW-0832">Ubl conjugation</keyword>
<keyword id="KW-0853">WD repeat</keyword>
<gene>
    <name evidence="5" type="primary">Wdr54</name>
    <name type="synonym">D3Mm3e</name>
</gene>
<name>WDR54_MOUSE</name>
<evidence type="ECO:0000250" key="1">
    <source>
        <dbReference type="UniProtKB" id="D3ZX63"/>
    </source>
</evidence>
<evidence type="ECO:0000250" key="2">
    <source>
        <dbReference type="UniProtKB" id="Q9H977"/>
    </source>
</evidence>
<evidence type="ECO:0000255" key="3"/>
<evidence type="ECO:0000305" key="4"/>
<evidence type="ECO:0000312" key="5">
    <source>
        <dbReference type="MGI" id="MGI:1922909"/>
    </source>
</evidence>